<evidence type="ECO:0000255" key="1">
    <source>
        <dbReference type="HAMAP-Rule" id="MF_00406"/>
    </source>
</evidence>
<organism>
    <name type="scientific">Syntrophotalea carbinolica (strain DSM 2380 / NBRC 103641 / GraBd1)</name>
    <name type="common">Pelobacter carbinolicus</name>
    <dbReference type="NCBI Taxonomy" id="338963"/>
    <lineage>
        <taxon>Bacteria</taxon>
        <taxon>Pseudomonadati</taxon>
        <taxon>Thermodesulfobacteriota</taxon>
        <taxon>Desulfuromonadia</taxon>
        <taxon>Desulfuromonadales</taxon>
        <taxon>Syntrophotaleaceae</taxon>
        <taxon>Syntrophotalea</taxon>
    </lineage>
</organism>
<feature type="chain" id="PRO_0000230822" description="3-hydroxyacyl-[acyl-carrier-protein] dehydratase FabZ">
    <location>
        <begin position="1"/>
        <end position="147"/>
    </location>
</feature>
<feature type="active site" evidence="1">
    <location>
        <position position="49"/>
    </location>
</feature>
<name>FABZ_SYNC1</name>
<protein>
    <recommendedName>
        <fullName evidence="1">3-hydroxyacyl-[acyl-carrier-protein] dehydratase FabZ</fullName>
        <ecNumber evidence="1">4.2.1.59</ecNumber>
    </recommendedName>
    <alternativeName>
        <fullName evidence="1">(3R)-hydroxymyristoyl-[acyl-carrier-protein] dehydratase</fullName>
        <shortName evidence="1">(3R)-hydroxymyristoyl-ACP dehydrase</shortName>
    </alternativeName>
    <alternativeName>
        <fullName evidence="1">Beta-hydroxyacyl-ACP dehydratase</fullName>
    </alternativeName>
</protein>
<accession>Q3A554</accession>
<comment type="function">
    <text evidence="1">Involved in unsaturated fatty acids biosynthesis. Catalyzes the dehydration of short chain beta-hydroxyacyl-ACPs and long chain saturated and unsaturated beta-hydroxyacyl-ACPs.</text>
</comment>
<comment type="catalytic activity">
    <reaction evidence="1">
        <text>a (3R)-hydroxyacyl-[ACP] = a (2E)-enoyl-[ACP] + H2O</text>
        <dbReference type="Rhea" id="RHEA:13097"/>
        <dbReference type="Rhea" id="RHEA-COMP:9925"/>
        <dbReference type="Rhea" id="RHEA-COMP:9945"/>
        <dbReference type="ChEBI" id="CHEBI:15377"/>
        <dbReference type="ChEBI" id="CHEBI:78784"/>
        <dbReference type="ChEBI" id="CHEBI:78827"/>
        <dbReference type="EC" id="4.2.1.59"/>
    </reaction>
</comment>
<comment type="subcellular location">
    <subcellularLocation>
        <location evidence="1">Cytoplasm</location>
    </subcellularLocation>
</comment>
<comment type="similarity">
    <text evidence="1">Belongs to the thioester dehydratase family. FabZ subfamily.</text>
</comment>
<proteinExistence type="inferred from homology"/>
<gene>
    <name evidence="1" type="primary">fabZ</name>
    <name type="ordered locus">Pcar_1254</name>
</gene>
<keyword id="KW-0963">Cytoplasm</keyword>
<keyword id="KW-0441">Lipid A biosynthesis</keyword>
<keyword id="KW-0444">Lipid biosynthesis</keyword>
<keyword id="KW-0443">Lipid metabolism</keyword>
<keyword id="KW-0456">Lyase</keyword>
<keyword id="KW-1185">Reference proteome</keyword>
<dbReference type="EC" id="4.2.1.59" evidence="1"/>
<dbReference type="EMBL" id="CP000142">
    <property type="protein sequence ID" value="ABA88503.1"/>
    <property type="molecule type" value="Genomic_DNA"/>
</dbReference>
<dbReference type="RefSeq" id="WP_011340978.1">
    <property type="nucleotide sequence ID" value="NC_007498.2"/>
</dbReference>
<dbReference type="SMR" id="Q3A554"/>
<dbReference type="STRING" id="338963.Pcar_1254"/>
<dbReference type="KEGG" id="pca:Pcar_1254"/>
<dbReference type="eggNOG" id="COG0764">
    <property type="taxonomic scope" value="Bacteria"/>
</dbReference>
<dbReference type="HOGENOM" id="CLU_078912_3_0_7"/>
<dbReference type="OrthoDB" id="9772788at2"/>
<dbReference type="Proteomes" id="UP000002534">
    <property type="component" value="Chromosome"/>
</dbReference>
<dbReference type="GO" id="GO:0005737">
    <property type="term" value="C:cytoplasm"/>
    <property type="evidence" value="ECO:0007669"/>
    <property type="project" value="UniProtKB-SubCell"/>
</dbReference>
<dbReference type="GO" id="GO:0016020">
    <property type="term" value="C:membrane"/>
    <property type="evidence" value="ECO:0007669"/>
    <property type="project" value="GOC"/>
</dbReference>
<dbReference type="GO" id="GO:0019171">
    <property type="term" value="F:(3R)-hydroxyacyl-[acyl-carrier-protein] dehydratase activity"/>
    <property type="evidence" value="ECO:0007669"/>
    <property type="project" value="UniProtKB-EC"/>
</dbReference>
<dbReference type="GO" id="GO:0006633">
    <property type="term" value="P:fatty acid biosynthetic process"/>
    <property type="evidence" value="ECO:0007669"/>
    <property type="project" value="UniProtKB-UniRule"/>
</dbReference>
<dbReference type="GO" id="GO:0009245">
    <property type="term" value="P:lipid A biosynthetic process"/>
    <property type="evidence" value="ECO:0007669"/>
    <property type="project" value="UniProtKB-UniRule"/>
</dbReference>
<dbReference type="CDD" id="cd01288">
    <property type="entry name" value="FabZ"/>
    <property type="match status" value="1"/>
</dbReference>
<dbReference type="FunFam" id="3.10.129.10:FF:000001">
    <property type="entry name" value="3-hydroxyacyl-[acyl-carrier-protein] dehydratase FabZ"/>
    <property type="match status" value="1"/>
</dbReference>
<dbReference type="Gene3D" id="3.10.129.10">
    <property type="entry name" value="Hotdog Thioesterase"/>
    <property type="match status" value="1"/>
</dbReference>
<dbReference type="HAMAP" id="MF_00406">
    <property type="entry name" value="FabZ"/>
    <property type="match status" value="1"/>
</dbReference>
<dbReference type="InterPro" id="IPR013114">
    <property type="entry name" value="FabA_FabZ"/>
</dbReference>
<dbReference type="InterPro" id="IPR010084">
    <property type="entry name" value="FabZ"/>
</dbReference>
<dbReference type="InterPro" id="IPR029069">
    <property type="entry name" value="HotDog_dom_sf"/>
</dbReference>
<dbReference type="NCBIfam" id="TIGR01750">
    <property type="entry name" value="fabZ"/>
    <property type="match status" value="1"/>
</dbReference>
<dbReference type="NCBIfam" id="NF000582">
    <property type="entry name" value="PRK00006.1"/>
    <property type="match status" value="1"/>
</dbReference>
<dbReference type="PANTHER" id="PTHR30272">
    <property type="entry name" value="3-HYDROXYACYL-[ACYL-CARRIER-PROTEIN] DEHYDRATASE"/>
    <property type="match status" value="1"/>
</dbReference>
<dbReference type="PANTHER" id="PTHR30272:SF1">
    <property type="entry name" value="3-HYDROXYACYL-[ACYL-CARRIER-PROTEIN] DEHYDRATASE"/>
    <property type="match status" value="1"/>
</dbReference>
<dbReference type="Pfam" id="PF07977">
    <property type="entry name" value="FabA"/>
    <property type="match status" value="1"/>
</dbReference>
<dbReference type="SUPFAM" id="SSF54637">
    <property type="entry name" value="Thioesterase/thiol ester dehydrase-isomerase"/>
    <property type="match status" value="1"/>
</dbReference>
<reference key="1">
    <citation type="submission" date="2005-10" db="EMBL/GenBank/DDBJ databases">
        <title>Complete sequence of Pelobacter carbinolicus DSM 2380.</title>
        <authorList>
            <person name="Copeland A."/>
            <person name="Lucas S."/>
            <person name="Lapidus A."/>
            <person name="Barry K."/>
            <person name="Detter J.C."/>
            <person name="Glavina T."/>
            <person name="Hammon N."/>
            <person name="Israni S."/>
            <person name="Pitluck S."/>
            <person name="Chertkov O."/>
            <person name="Schmutz J."/>
            <person name="Larimer F."/>
            <person name="Land M."/>
            <person name="Kyrpides N."/>
            <person name="Ivanova N."/>
            <person name="Richardson P."/>
        </authorList>
    </citation>
    <scope>NUCLEOTIDE SEQUENCE [LARGE SCALE GENOMIC DNA]</scope>
    <source>
        <strain>DSM 2380 / NBRC 103641 / GraBd1</strain>
    </source>
</reference>
<sequence>MTLEILDIMKLLPHRYPFLLVDRIEDLEPGKRAVGIKNVTINEPFFQGHYPGHPIMPGVLIIEAMAQVGGAVAAITAGDKDDQVPYFTGINKARFRRPVGPGDVLQLQLELLSSRRGLFVFSGKAYVDGNLVAEAELKAVFAPRSQD</sequence>